<name>ECHM_BOVIN</name>
<evidence type="ECO:0000250" key="1"/>
<evidence type="ECO:0000250" key="2">
    <source>
        <dbReference type="UniProtKB" id="P14604"/>
    </source>
</evidence>
<evidence type="ECO:0000250" key="3">
    <source>
        <dbReference type="UniProtKB" id="P30084"/>
    </source>
</evidence>
<evidence type="ECO:0000250" key="4">
    <source>
        <dbReference type="UniProtKB" id="Q8BH95"/>
    </source>
</evidence>
<evidence type="ECO:0000305" key="5"/>
<gene>
    <name type="primary">ECHS1</name>
</gene>
<comment type="function">
    <text evidence="2 3">Converts unsaturated trans-2-enoyl-CoA species ((2E)-enoyl-CoA) to the corresponding 3(S)-3-hydroxyacyl-CoA species through addition of a water molecule to the double bond. Catalyzes the hydration of medium- and short-chained fatty enoyl-CoA thioesters from 4 carbons long (C4) up to C16 (By similarity). Has high substrate specificity for crotonyl-CoA ((2E)-butenoyl-CoA) and moderate specificity for acryloyl-CoA, 3-methylcrotonyl-CoA (3-methyl-(2E)-butenoyl-CoA) and methacrylyl-CoA ((2E)-2-methylpropenoyl-CoA). Can bind tiglyl-CoA (2-methylcrotonoyl-CoA), but hydrates only a small amount of this substrate (By similarity). Plays a key role in the beta-oxidation spiral of short- and medium-chain fatty acid oxidation. At a lower rate than the hydratase reaction, catalyzes the isomerase reaction of trans-3-enoyl-CoA species (such as (3E)-hexenoyl-CoA) to trans-2-enoyl-CoA species (such as (2E)-hexenoyl-CoA), which are subsequently hydrated to 3(S)-3-hydroxyacyl-CoA species (such as (3S)-hydroxyhexanoyl-CoA) (By similarity).</text>
</comment>
<comment type="catalytic activity">
    <reaction evidence="3">
        <text>a (3S)-3-hydroxyacyl-CoA = a (2E)-enoyl-CoA + H2O</text>
        <dbReference type="Rhea" id="RHEA:16105"/>
        <dbReference type="ChEBI" id="CHEBI:15377"/>
        <dbReference type="ChEBI" id="CHEBI:57318"/>
        <dbReference type="ChEBI" id="CHEBI:58856"/>
        <dbReference type="EC" id="4.2.1.17"/>
    </reaction>
    <physiologicalReaction direction="right-to-left" evidence="3">
        <dbReference type="Rhea" id="RHEA:16107"/>
    </physiologicalReaction>
</comment>
<comment type="catalytic activity">
    <reaction evidence="2">
        <text>a (3E)-enoyl-CoA = a 4-saturated (2E)-enoyl-CoA</text>
        <dbReference type="Rhea" id="RHEA:45228"/>
        <dbReference type="ChEBI" id="CHEBI:58521"/>
        <dbReference type="ChEBI" id="CHEBI:85097"/>
        <dbReference type="EC" id="5.3.3.8"/>
    </reaction>
    <physiologicalReaction direction="left-to-right" evidence="2">
        <dbReference type="Rhea" id="RHEA:45229"/>
    </physiologicalReaction>
</comment>
<comment type="catalytic activity">
    <reaction evidence="2">
        <text>(3E)-hexenoyl-CoA = (2E)-hexenoyl-CoA</text>
        <dbReference type="Rhea" id="RHEA:45736"/>
        <dbReference type="ChEBI" id="CHEBI:62077"/>
        <dbReference type="ChEBI" id="CHEBI:84790"/>
    </reaction>
    <physiologicalReaction direction="left-to-right" evidence="2">
        <dbReference type="Rhea" id="RHEA:45737"/>
    </physiologicalReaction>
</comment>
<comment type="catalytic activity">
    <reaction evidence="3">
        <text>(3S)-3-hydroxybutanoyl-CoA = (2E)-butenoyl-CoA + H2O</text>
        <dbReference type="Rhea" id="RHEA:26558"/>
        <dbReference type="ChEBI" id="CHEBI:15377"/>
        <dbReference type="ChEBI" id="CHEBI:57316"/>
        <dbReference type="ChEBI" id="CHEBI:57332"/>
    </reaction>
    <physiologicalReaction direction="right-to-left" evidence="3">
        <dbReference type="Rhea" id="RHEA:26560"/>
    </physiologicalReaction>
</comment>
<comment type="catalytic activity">
    <reaction evidence="3">
        <text>3-hydroxyisovaleryl-CoA = 3-methylbut-2-enoyl-CoA + H2O</text>
        <dbReference type="Rhea" id="RHEA:31079"/>
        <dbReference type="ChEBI" id="CHEBI:15377"/>
        <dbReference type="ChEBI" id="CHEBI:57344"/>
        <dbReference type="ChEBI" id="CHEBI:62555"/>
    </reaction>
    <physiologicalReaction direction="right-to-left" evidence="3">
        <dbReference type="Rhea" id="RHEA:31081"/>
    </physiologicalReaction>
</comment>
<comment type="catalytic activity">
    <reaction evidence="3">
        <text>3-hydroxypropanoyl-CoA = acryloyl-CoA + H2O</text>
        <dbReference type="Rhea" id="RHEA:26518"/>
        <dbReference type="ChEBI" id="CHEBI:15377"/>
        <dbReference type="ChEBI" id="CHEBI:57367"/>
        <dbReference type="ChEBI" id="CHEBI:58528"/>
    </reaction>
    <physiologicalReaction direction="right-to-left" evidence="3">
        <dbReference type="Rhea" id="RHEA:26520"/>
    </physiologicalReaction>
</comment>
<comment type="catalytic activity">
    <reaction evidence="3">
        <text>3-hydroxybutanoyl-CoA = (2E)-butenoyl-CoA + H2O</text>
        <dbReference type="Rhea" id="RHEA:45584"/>
        <dbReference type="ChEBI" id="CHEBI:15377"/>
        <dbReference type="ChEBI" id="CHEBI:57332"/>
        <dbReference type="ChEBI" id="CHEBI:78611"/>
    </reaction>
    <physiologicalReaction direction="right-to-left" evidence="3">
        <dbReference type="Rhea" id="RHEA:45586"/>
    </physiologicalReaction>
</comment>
<comment type="catalytic activity">
    <reaction evidence="3">
        <text>2-methylpropenoyl-CoA + H2O = (S)-3-hydroxyisobutanoyl-CoA</text>
        <dbReference type="Rhea" id="RHEA:31175"/>
        <dbReference type="ChEBI" id="CHEBI:15377"/>
        <dbReference type="ChEBI" id="CHEBI:62500"/>
        <dbReference type="ChEBI" id="CHEBI:62611"/>
    </reaction>
    <physiologicalReaction direction="left-to-right" evidence="3">
        <dbReference type="Rhea" id="RHEA:31176"/>
    </physiologicalReaction>
</comment>
<comment type="catalytic activity">
    <reaction evidence="2">
        <text>(3S)-hydroxyhexanoyl-CoA = (2E)-hexenoyl-CoA + H2O</text>
        <dbReference type="Rhea" id="RHEA:30547"/>
        <dbReference type="ChEBI" id="CHEBI:15377"/>
        <dbReference type="ChEBI" id="CHEBI:62075"/>
        <dbReference type="ChEBI" id="CHEBI:62077"/>
    </reaction>
    <physiologicalReaction direction="right-to-left" evidence="2">
        <dbReference type="Rhea" id="RHEA:30549"/>
    </physiologicalReaction>
</comment>
<comment type="catalytic activity">
    <reaction evidence="2">
        <text>(3S)-hydroxydecanoyl-CoA = (2E)-decenoyl-CoA + H2O</text>
        <dbReference type="Rhea" id="RHEA:31191"/>
        <dbReference type="ChEBI" id="CHEBI:15377"/>
        <dbReference type="ChEBI" id="CHEBI:61406"/>
        <dbReference type="ChEBI" id="CHEBI:62616"/>
    </reaction>
    <physiologicalReaction direction="right-to-left" evidence="2">
        <dbReference type="Rhea" id="RHEA:31193"/>
    </physiologicalReaction>
</comment>
<comment type="pathway">
    <text evidence="3">Lipid metabolism; fatty acid beta-oxidation.</text>
</comment>
<comment type="subunit">
    <text evidence="2">Homohexamer; dimer of trimers.</text>
</comment>
<comment type="subcellular location">
    <subcellularLocation>
        <location evidence="2">Mitochondrion matrix</location>
    </subcellularLocation>
</comment>
<comment type="similarity">
    <text evidence="5">Belongs to the enoyl-CoA hydratase/isomerase family.</text>
</comment>
<organism>
    <name type="scientific">Bos taurus</name>
    <name type="common">Bovine</name>
    <dbReference type="NCBI Taxonomy" id="9913"/>
    <lineage>
        <taxon>Eukaryota</taxon>
        <taxon>Metazoa</taxon>
        <taxon>Chordata</taxon>
        <taxon>Craniata</taxon>
        <taxon>Vertebrata</taxon>
        <taxon>Euteleostomi</taxon>
        <taxon>Mammalia</taxon>
        <taxon>Eutheria</taxon>
        <taxon>Laurasiatheria</taxon>
        <taxon>Artiodactyla</taxon>
        <taxon>Ruminantia</taxon>
        <taxon>Pecora</taxon>
        <taxon>Bovidae</taxon>
        <taxon>Bovinae</taxon>
        <taxon>Bos</taxon>
    </lineage>
</organism>
<proteinExistence type="evidence at transcript level"/>
<dbReference type="EC" id="4.2.1.17" evidence="3"/>
<dbReference type="EC" id="5.3.3.8" evidence="2"/>
<dbReference type="EMBL" id="DQ058610">
    <property type="protein sequence ID" value="AAY83884.1"/>
    <property type="molecule type" value="mRNA"/>
</dbReference>
<dbReference type="EMBL" id="DQ058603">
    <property type="protein sequence ID" value="AAY83878.1"/>
    <property type="molecule type" value="Genomic_DNA"/>
</dbReference>
<dbReference type="EMBL" id="BT021569">
    <property type="protein sequence ID" value="AAX46416.1"/>
    <property type="molecule type" value="mRNA"/>
</dbReference>
<dbReference type="EMBL" id="BC109605">
    <property type="protein sequence ID" value="AAI09606.1"/>
    <property type="molecule type" value="mRNA"/>
</dbReference>
<dbReference type="RefSeq" id="NP_001020377.2">
    <property type="nucleotide sequence ID" value="NM_001025206.2"/>
</dbReference>
<dbReference type="SMR" id="Q58DM8"/>
<dbReference type="FunCoup" id="Q58DM8">
    <property type="interactions" value="1602"/>
</dbReference>
<dbReference type="STRING" id="9913.ENSBTAP00000073344"/>
<dbReference type="PaxDb" id="9913-ENSBTAP00000042386"/>
<dbReference type="PeptideAtlas" id="Q58DM8"/>
<dbReference type="GeneID" id="281748"/>
<dbReference type="KEGG" id="bta:281748"/>
<dbReference type="CTD" id="1892"/>
<dbReference type="VEuPathDB" id="HostDB:ENSBTAG00000017710"/>
<dbReference type="eggNOG" id="KOG1680">
    <property type="taxonomic scope" value="Eukaryota"/>
</dbReference>
<dbReference type="HOGENOM" id="CLU_009834_7_6_1"/>
<dbReference type="InParanoid" id="Q58DM8"/>
<dbReference type="OMA" id="FCDARED"/>
<dbReference type="OrthoDB" id="2018133at2759"/>
<dbReference type="TreeFam" id="TF314497"/>
<dbReference type="BioCyc" id="MetaCyc:MONOMER-11697"/>
<dbReference type="Reactome" id="R-BTA-70895">
    <property type="pathway name" value="Branched-chain amino acid catabolism"/>
</dbReference>
<dbReference type="Reactome" id="R-BTA-77310">
    <property type="pathway name" value="Beta oxidation of lauroyl-CoA to decanoyl-CoA-CoA"/>
</dbReference>
<dbReference type="Reactome" id="R-BTA-77346">
    <property type="pathway name" value="Beta oxidation of decanoyl-CoA to octanoyl-CoA-CoA"/>
</dbReference>
<dbReference type="Reactome" id="R-BTA-77348">
    <property type="pathway name" value="Beta oxidation of octanoyl-CoA to hexanoyl-CoA"/>
</dbReference>
<dbReference type="Reactome" id="R-BTA-77350">
    <property type="pathway name" value="Beta oxidation of hexanoyl-CoA to butanoyl-CoA"/>
</dbReference>
<dbReference type="Reactome" id="R-BTA-77352">
    <property type="pathway name" value="Beta oxidation of butanoyl-CoA to acetyl-CoA"/>
</dbReference>
<dbReference type="SABIO-RK" id="Q58DM8"/>
<dbReference type="UniPathway" id="UPA00659"/>
<dbReference type="Proteomes" id="UP000009136">
    <property type="component" value="Chromosome 26"/>
</dbReference>
<dbReference type="Bgee" id="ENSBTAG00000017710">
    <property type="expression patterns" value="Expressed in liver and 105 other cell types or tissues"/>
</dbReference>
<dbReference type="GO" id="GO:0005759">
    <property type="term" value="C:mitochondrial matrix"/>
    <property type="evidence" value="ECO:0007669"/>
    <property type="project" value="UniProtKB-SubCell"/>
</dbReference>
<dbReference type="GO" id="GO:0005739">
    <property type="term" value="C:mitochondrion"/>
    <property type="evidence" value="ECO:0000318"/>
    <property type="project" value="GO_Central"/>
</dbReference>
<dbReference type="GO" id="GO:0043956">
    <property type="term" value="F:3-hydroxypropionyl-CoA dehydratase activity"/>
    <property type="evidence" value="ECO:0007669"/>
    <property type="project" value="RHEA"/>
</dbReference>
<dbReference type="GO" id="GO:0120092">
    <property type="term" value="F:crotonyl-CoA hydratase activity"/>
    <property type="evidence" value="ECO:0007669"/>
    <property type="project" value="RHEA"/>
</dbReference>
<dbReference type="GO" id="GO:0004165">
    <property type="term" value="F:delta(3)-delta(2)-enoyl-CoA isomerase activity"/>
    <property type="evidence" value="ECO:0007669"/>
    <property type="project" value="RHEA"/>
</dbReference>
<dbReference type="GO" id="GO:0004300">
    <property type="term" value="F:enoyl-CoA hydratase activity"/>
    <property type="evidence" value="ECO:0000250"/>
    <property type="project" value="UniProtKB"/>
</dbReference>
<dbReference type="GO" id="GO:0006635">
    <property type="term" value="P:fatty acid beta-oxidation"/>
    <property type="evidence" value="ECO:0000250"/>
    <property type="project" value="UniProtKB"/>
</dbReference>
<dbReference type="CDD" id="cd06558">
    <property type="entry name" value="crotonase-like"/>
    <property type="match status" value="1"/>
</dbReference>
<dbReference type="FunFam" id="3.90.226.10:FF:000213">
    <property type="entry name" value="Enoyl-CoA hydratase, mitochondrial"/>
    <property type="match status" value="1"/>
</dbReference>
<dbReference type="FunFam" id="1.10.12.10:FF:000001">
    <property type="entry name" value="Probable enoyl-CoA hydratase, mitochondrial"/>
    <property type="match status" value="1"/>
</dbReference>
<dbReference type="Gene3D" id="3.90.226.10">
    <property type="entry name" value="2-enoyl-CoA Hydratase, Chain A, domain 1"/>
    <property type="match status" value="1"/>
</dbReference>
<dbReference type="Gene3D" id="1.10.12.10">
    <property type="entry name" value="Lyase 2-enoyl-coa Hydratase, Chain A, domain 2"/>
    <property type="match status" value="1"/>
</dbReference>
<dbReference type="InterPro" id="IPR029045">
    <property type="entry name" value="ClpP/crotonase-like_dom_sf"/>
</dbReference>
<dbReference type="InterPro" id="IPR018376">
    <property type="entry name" value="Enoyl-CoA_hyd/isom_CS"/>
</dbReference>
<dbReference type="InterPro" id="IPR001753">
    <property type="entry name" value="Enoyl-CoA_hydra/iso"/>
</dbReference>
<dbReference type="InterPro" id="IPR014748">
    <property type="entry name" value="Enoyl-CoA_hydra_C"/>
</dbReference>
<dbReference type="PANTHER" id="PTHR11941:SF54">
    <property type="entry name" value="ENOYL-COA HYDRATASE, MITOCHONDRIAL"/>
    <property type="match status" value="1"/>
</dbReference>
<dbReference type="PANTHER" id="PTHR11941">
    <property type="entry name" value="ENOYL-COA HYDRATASE-RELATED"/>
    <property type="match status" value="1"/>
</dbReference>
<dbReference type="Pfam" id="PF00378">
    <property type="entry name" value="ECH_1"/>
    <property type="match status" value="1"/>
</dbReference>
<dbReference type="SUPFAM" id="SSF52096">
    <property type="entry name" value="ClpP/crotonase"/>
    <property type="match status" value="1"/>
</dbReference>
<dbReference type="PROSITE" id="PS00166">
    <property type="entry name" value="ENOYL_COA_HYDRATASE"/>
    <property type="match status" value="1"/>
</dbReference>
<keyword id="KW-0007">Acetylation</keyword>
<keyword id="KW-0276">Fatty acid metabolism</keyword>
<keyword id="KW-0413">Isomerase</keyword>
<keyword id="KW-0443">Lipid metabolism</keyword>
<keyword id="KW-0456">Lyase</keyword>
<keyword id="KW-0496">Mitochondrion</keyword>
<keyword id="KW-1185">Reference proteome</keyword>
<keyword id="KW-0809">Transit peptide</keyword>
<reference key="1">
    <citation type="submission" date="2005-05" db="EMBL/GenBank/DDBJ databases">
        <title>Comparative mapping of the bovine SPRN locus.</title>
        <authorList>
            <person name="Ferretti L."/>
            <person name="Uboldi C."/>
            <person name="Del Vecchio I."/>
            <person name="Eggen A."/>
            <person name="Brunner R."/>
            <person name="Iannuzzi L."/>
        </authorList>
    </citation>
    <scope>NUCLEOTIDE SEQUENCE [GENOMIC DNA / MRNA]</scope>
</reference>
<reference key="2">
    <citation type="journal article" date="2005" name="BMC Genomics">
        <title>Characterization of 954 bovine full-CDS cDNA sequences.</title>
        <authorList>
            <person name="Harhay G.P."/>
            <person name="Sonstegard T.S."/>
            <person name="Keele J.W."/>
            <person name="Heaton M.P."/>
            <person name="Clawson M.L."/>
            <person name="Snelling W.M."/>
            <person name="Wiedmann R.T."/>
            <person name="Van Tassell C.P."/>
            <person name="Smith T.P.L."/>
        </authorList>
    </citation>
    <scope>NUCLEOTIDE SEQUENCE [LARGE SCALE MRNA]</scope>
</reference>
<reference key="3">
    <citation type="submission" date="2005-11" db="EMBL/GenBank/DDBJ databases">
        <authorList>
            <consortium name="NIH - Mammalian Gene Collection (MGC) project"/>
        </authorList>
    </citation>
    <scope>NUCLEOTIDE SEQUENCE [LARGE SCALE MRNA]</scope>
    <source>
        <strain>Crossbred X Angus</strain>
        <tissue>Liver</tissue>
    </source>
</reference>
<protein>
    <recommendedName>
        <fullName>Enoyl-CoA hydratase, mitochondrial</fullName>
        <shortName>mECH</shortName>
        <shortName>mECH1</shortName>
        <ecNumber evidence="3">4.2.1.17</ecNumber>
        <ecNumber evidence="2">5.3.3.8</ecNumber>
    </recommendedName>
    <alternativeName>
        <fullName>Enoyl-CoA hydratase 1</fullName>
        <shortName>ECHS1</shortName>
    </alternativeName>
    <alternativeName>
        <fullName>Short-chain enoyl-CoA hydratase</fullName>
        <shortName>SCEH</shortName>
    </alternativeName>
</protein>
<feature type="transit peptide" description="Mitochondrion" evidence="1">
    <location>
        <begin position="1"/>
        <end position="27"/>
    </location>
</feature>
<feature type="chain" id="PRO_0000007410" description="Enoyl-CoA hydratase, mitochondrial">
    <location>
        <begin position="28"/>
        <end position="290"/>
    </location>
</feature>
<feature type="binding site" evidence="1">
    <location>
        <begin position="98"/>
        <end position="101"/>
    </location>
    <ligand>
        <name>substrate</name>
    </ligand>
</feature>
<feature type="binding site" evidence="1">
    <location>
        <position position="141"/>
    </location>
    <ligand>
        <name>substrate</name>
    </ligand>
</feature>
<feature type="site" description="Important for catalytic activity" evidence="1">
    <location>
        <position position="164"/>
    </location>
</feature>
<feature type="modified residue" description="N6-acetyllysine; alternate" evidence="4">
    <location>
        <position position="101"/>
    </location>
</feature>
<feature type="modified residue" description="N6-succinyllysine; alternate" evidence="4">
    <location>
        <position position="101"/>
    </location>
</feature>
<feature type="modified residue" description="N6-succinyllysine" evidence="4">
    <location>
        <position position="204"/>
    </location>
</feature>
<feature type="modified residue" description="N6-acetyllysine" evidence="4">
    <location>
        <position position="211"/>
    </location>
</feature>
<feature type="sequence conflict" description="In Ref. 3; AAI09606." evidence="5" ref="3">
    <original>I</original>
    <variation>N</variation>
    <location>
        <position position="198"/>
    </location>
</feature>
<feature type="sequence conflict" description="In Ref. 1; AAY83884." evidence="5" ref="1">
    <original>TEDRKEGMA</original>
    <variation>PKTGRKAWP</variation>
    <location>
        <begin position="269"/>
        <end position="277"/>
    </location>
</feature>
<accession>Q58DM8</accession>
<accession>Q2TBV2</accession>
<accession>Q4PS76</accession>
<sequence>MAALRALLPRVRAPLRPWLFCPVQRSFASSAAFEYIITAKKGRNSNVGLIQLNRPKALNALCNGLIVELNQALQAFEEDPAVGAIVLTGGEKVFAAGADIKEMQSLTFQNCYSGGFLSHWDQLTRVKKPVIAAVNGYALGGGCELAMMCDIIYAGEKAQFGQPEILIGTIPGAGGTQRLTRAVGKSLAMEMVLTGDRISAQDAKQAGLVSKIFPVETVVEEAIQCAEKIASNSKIVTAMAKESVNAAFEMTLAEGVKLEKKLFYSTFATEDRKEGMAAFVEKRKANFKDQ</sequence>